<feature type="chain" id="PRO_1000067575" description="Large ribosomal subunit protein uL24">
    <location>
        <begin position="1"/>
        <end position="103"/>
    </location>
</feature>
<comment type="function">
    <text evidence="1">One of two assembly initiator proteins, it binds directly to the 5'-end of the 23S rRNA, where it nucleates assembly of the 50S subunit.</text>
</comment>
<comment type="function">
    <text evidence="1">One of the proteins that surrounds the polypeptide exit tunnel on the outside of the subunit.</text>
</comment>
<comment type="subunit">
    <text evidence="1">Part of the 50S ribosomal subunit.</text>
</comment>
<comment type="similarity">
    <text evidence="1">Belongs to the universal ribosomal protein uL24 family.</text>
</comment>
<reference key="1">
    <citation type="journal article" date="2016" name="Genome Announc.">
        <title>Complete genome sequence of Alkaliphilus metalliredigens strain QYMF, an alkaliphilic and metal-reducing bacterium isolated from borax-contaminated leachate ponds.</title>
        <authorList>
            <person name="Hwang C."/>
            <person name="Copeland A."/>
            <person name="Lucas S."/>
            <person name="Lapidus A."/>
            <person name="Barry K."/>
            <person name="Detter J.C."/>
            <person name="Glavina Del Rio T."/>
            <person name="Hammon N."/>
            <person name="Israni S."/>
            <person name="Dalin E."/>
            <person name="Tice H."/>
            <person name="Pitluck S."/>
            <person name="Chertkov O."/>
            <person name="Brettin T."/>
            <person name="Bruce D."/>
            <person name="Han C."/>
            <person name="Schmutz J."/>
            <person name="Larimer F."/>
            <person name="Land M.L."/>
            <person name="Hauser L."/>
            <person name="Kyrpides N."/>
            <person name="Mikhailova N."/>
            <person name="Ye Q."/>
            <person name="Zhou J."/>
            <person name="Richardson P."/>
            <person name="Fields M.W."/>
        </authorList>
    </citation>
    <scope>NUCLEOTIDE SEQUENCE [LARGE SCALE GENOMIC DNA]</scope>
    <source>
        <strain>QYMF</strain>
    </source>
</reference>
<sequence>MHVKKDDIVVVISGKDKGKKGKILHAIPKKERIIVEGVNMVTKHQKPTQQSQQGGIIKQEAAIHVSNVLLWDKKANQGVRAGHKVLENGEKVRVSKKTGEVLD</sequence>
<organism>
    <name type="scientific">Alkaliphilus metalliredigens (strain QYMF)</name>
    <dbReference type="NCBI Taxonomy" id="293826"/>
    <lineage>
        <taxon>Bacteria</taxon>
        <taxon>Bacillati</taxon>
        <taxon>Bacillota</taxon>
        <taxon>Clostridia</taxon>
        <taxon>Peptostreptococcales</taxon>
        <taxon>Natronincolaceae</taxon>
        <taxon>Alkaliphilus</taxon>
    </lineage>
</organism>
<evidence type="ECO:0000255" key="1">
    <source>
        <dbReference type="HAMAP-Rule" id="MF_01326"/>
    </source>
</evidence>
<evidence type="ECO:0000305" key="2"/>
<dbReference type="EMBL" id="CP000724">
    <property type="protein sequence ID" value="ABR50539.1"/>
    <property type="molecule type" value="Genomic_DNA"/>
</dbReference>
<dbReference type="RefSeq" id="WP_012065430.1">
    <property type="nucleotide sequence ID" value="NC_009633.1"/>
</dbReference>
<dbReference type="SMR" id="A6TWH1"/>
<dbReference type="STRING" id="293826.Amet_4467"/>
<dbReference type="KEGG" id="amt:Amet_4467"/>
<dbReference type="eggNOG" id="COG0198">
    <property type="taxonomic scope" value="Bacteria"/>
</dbReference>
<dbReference type="HOGENOM" id="CLU_093315_2_3_9"/>
<dbReference type="OrthoDB" id="9807419at2"/>
<dbReference type="Proteomes" id="UP000001572">
    <property type="component" value="Chromosome"/>
</dbReference>
<dbReference type="GO" id="GO:1990904">
    <property type="term" value="C:ribonucleoprotein complex"/>
    <property type="evidence" value="ECO:0007669"/>
    <property type="project" value="UniProtKB-KW"/>
</dbReference>
<dbReference type="GO" id="GO:0005840">
    <property type="term" value="C:ribosome"/>
    <property type="evidence" value="ECO:0007669"/>
    <property type="project" value="UniProtKB-KW"/>
</dbReference>
<dbReference type="GO" id="GO:0019843">
    <property type="term" value="F:rRNA binding"/>
    <property type="evidence" value="ECO:0007669"/>
    <property type="project" value="UniProtKB-UniRule"/>
</dbReference>
<dbReference type="GO" id="GO:0003735">
    <property type="term" value="F:structural constituent of ribosome"/>
    <property type="evidence" value="ECO:0007669"/>
    <property type="project" value="InterPro"/>
</dbReference>
<dbReference type="GO" id="GO:0006412">
    <property type="term" value="P:translation"/>
    <property type="evidence" value="ECO:0007669"/>
    <property type="project" value="UniProtKB-UniRule"/>
</dbReference>
<dbReference type="CDD" id="cd06089">
    <property type="entry name" value="KOW_RPL26"/>
    <property type="match status" value="1"/>
</dbReference>
<dbReference type="FunFam" id="2.30.30.30:FF:000004">
    <property type="entry name" value="50S ribosomal protein L24"/>
    <property type="match status" value="1"/>
</dbReference>
<dbReference type="Gene3D" id="2.30.30.30">
    <property type="match status" value="1"/>
</dbReference>
<dbReference type="HAMAP" id="MF_01326_B">
    <property type="entry name" value="Ribosomal_uL24_B"/>
    <property type="match status" value="1"/>
</dbReference>
<dbReference type="InterPro" id="IPR005824">
    <property type="entry name" value="KOW"/>
</dbReference>
<dbReference type="InterPro" id="IPR014722">
    <property type="entry name" value="Rib_uL2_dom2"/>
</dbReference>
<dbReference type="InterPro" id="IPR003256">
    <property type="entry name" value="Ribosomal_uL24"/>
</dbReference>
<dbReference type="InterPro" id="IPR005825">
    <property type="entry name" value="Ribosomal_uL24_CS"/>
</dbReference>
<dbReference type="InterPro" id="IPR041988">
    <property type="entry name" value="Ribosomal_uL24_KOW"/>
</dbReference>
<dbReference type="InterPro" id="IPR008991">
    <property type="entry name" value="Translation_prot_SH3-like_sf"/>
</dbReference>
<dbReference type="NCBIfam" id="TIGR01079">
    <property type="entry name" value="rplX_bact"/>
    <property type="match status" value="1"/>
</dbReference>
<dbReference type="PANTHER" id="PTHR12903">
    <property type="entry name" value="MITOCHONDRIAL RIBOSOMAL PROTEIN L24"/>
    <property type="match status" value="1"/>
</dbReference>
<dbReference type="Pfam" id="PF00467">
    <property type="entry name" value="KOW"/>
    <property type="match status" value="1"/>
</dbReference>
<dbReference type="Pfam" id="PF17136">
    <property type="entry name" value="ribosomal_L24"/>
    <property type="match status" value="1"/>
</dbReference>
<dbReference type="SMART" id="SM00739">
    <property type="entry name" value="KOW"/>
    <property type="match status" value="1"/>
</dbReference>
<dbReference type="SUPFAM" id="SSF50104">
    <property type="entry name" value="Translation proteins SH3-like domain"/>
    <property type="match status" value="1"/>
</dbReference>
<dbReference type="PROSITE" id="PS01108">
    <property type="entry name" value="RIBOSOMAL_L24"/>
    <property type="match status" value="1"/>
</dbReference>
<gene>
    <name evidence="1" type="primary">rplX</name>
    <name type="ordered locus">Amet_4467</name>
</gene>
<protein>
    <recommendedName>
        <fullName evidence="1">Large ribosomal subunit protein uL24</fullName>
    </recommendedName>
    <alternativeName>
        <fullName evidence="2">50S ribosomal protein L24</fullName>
    </alternativeName>
</protein>
<keyword id="KW-1185">Reference proteome</keyword>
<keyword id="KW-0687">Ribonucleoprotein</keyword>
<keyword id="KW-0689">Ribosomal protein</keyword>
<keyword id="KW-0694">RNA-binding</keyword>
<keyword id="KW-0699">rRNA-binding</keyword>
<name>RL24_ALKMQ</name>
<accession>A6TWH1</accession>
<proteinExistence type="inferred from homology"/>